<feature type="chain" id="PRO_0000387291" description="Probable inorganic carbon transporter subunit DabA">
    <location>
        <begin position="1"/>
        <end position="808"/>
    </location>
</feature>
<feature type="binding site" evidence="1">
    <location>
        <position position="335"/>
    </location>
    <ligand>
        <name>Zn(2+)</name>
        <dbReference type="ChEBI" id="CHEBI:29105"/>
    </ligand>
</feature>
<feature type="binding site" evidence="1">
    <location>
        <position position="337"/>
    </location>
    <ligand>
        <name>Zn(2+)</name>
        <dbReference type="ChEBI" id="CHEBI:29105"/>
    </ligand>
</feature>
<feature type="binding site" evidence="1">
    <location>
        <position position="497"/>
    </location>
    <ligand>
        <name>Zn(2+)</name>
        <dbReference type="ChEBI" id="CHEBI:29105"/>
    </ligand>
</feature>
<feature type="binding site" evidence="1">
    <location>
        <position position="512"/>
    </location>
    <ligand>
        <name>Zn(2+)</name>
        <dbReference type="ChEBI" id="CHEBI:29105"/>
    </ligand>
</feature>
<proteinExistence type="inferred from homology"/>
<reference key="1">
    <citation type="journal article" date="2004" name="Nat. Biotechnol.">
        <title>Complete genome sequence of the metabolically versatile photosynthetic bacterium Rhodopseudomonas palustris.</title>
        <authorList>
            <person name="Larimer F.W."/>
            <person name="Chain P."/>
            <person name="Hauser L."/>
            <person name="Lamerdin J.E."/>
            <person name="Malfatti S."/>
            <person name="Do L."/>
            <person name="Land M.L."/>
            <person name="Pelletier D.A."/>
            <person name="Beatty J.T."/>
            <person name="Lang A.S."/>
            <person name="Tabita F.R."/>
            <person name="Gibson J.L."/>
            <person name="Hanson T.E."/>
            <person name="Bobst C."/>
            <person name="Torres y Torres J.L."/>
            <person name="Peres C."/>
            <person name="Harrison F.H."/>
            <person name="Gibson J."/>
            <person name="Harwood C.S."/>
        </authorList>
    </citation>
    <scope>NUCLEOTIDE SEQUENCE [LARGE SCALE GENOMIC DNA]</scope>
    <source>
        <strain>ATCC BAA-98 / CGA009</strain>
    </source>
</reference>
<gene>
    <name evidence="1" type="primary">dabA</name>
    <name type="ordered locus">RPA2996</name>
</gene>
<name>DABA_RHOPA</name>
<keyword id="KW-0997">Cell inner membrane</keyword>
<keyword id="KW-1003">Cell membrane</keyword>
<keyword id="KW-0472">Membrane</keyword>
<keyword id="KW-0479">Metal-binding</keyword>
<keyword id="KW-0813">Transport</keyword>
<keyword id="KW-0862">Zinc</keyword>
<comment type="function">
    <text evidence="1">Part of an energy-coupled inorganic carbon pump.</text>
</comment>
<comment type="cofactor">
    <cofactor evidence="1">
        <name>Zn(2+)</name>
        <dbReference type="ChEBI" id="CHEBI:29105"/>
    </cofactor>
</comment>
<comment type="subunit">
    <text evidence="1">Forms a complex with DabB.</text>
</comment>
<comment type="subcellular location">
    <subcellularLocation>
        <location evidence="1">Cell inner membrane</location>
        <topology evidence="1">Peripheral membrane protein</topology>
    </subcellularLocation>
</comment>
<comment type="similarity">
    <text evidence="1">Belongs to the inorganic carbon transporter (TC 9.A.2) DabA family.</text>
</comment>
<accession>Q6N5H8</accession>
<evidence type="ECO:0000255" key="1">
    <source>
        <dbReference type="HAMAP-Rule" id="MF_01871"/>
    </source>
</evidence>
<sequence>MLMTKPPVPQLNLTVVREAAERAARAIPPLWPLESSVAVNPFLGQTGEPLAMAAARLRRVAGAAVTMPRTWYAERIASGELSDVDLAAAIDAAPPTTRPLTIAELKRAAQIEIAPPQALPTVAELASAVSGFDWTGFVAERISAWASGYFDRGQALWAAPKGPNAYAAWRLTATHDLTPEIFGLTGFAADVAAAPESADAALIRAVEQLGLSEAASESYFHRLLISLGGWAQLARYRLWQAELSGSTDTAVTDLIAIRAVWDSTLLRKYQPQIAAEWTDAINGYVQPLQPTEDDHINAILQDAVERAAQRKLQTVLAASAQPKPDDRPALQMAFCIDVRSEPFRRALESLDPRIRTLGFGGFFGLPIAHRRFASDVVEARLPVLLPPRVTTSCSGHTHAHEANDRAKRVAARAKRAWGRFKLAAISSFAFVESMGPVYVAKLLSDGLRSGTRRTNADPAPQFDPPLALGARVDTAEAVLRAMSLTGPFAPLVLIAGHGASVVNNPHASALHCGACGGFPGDVNARLLAGLLNDPQVRTALIGRDIAIPADTLFVGALHDTTTDAVTLYDADHPSPAHASALAQTRDWLATAGALTRSERALRLPRAATGGAIARRARDWAEVRPEWALAGCRAFIAAPRPHTSGRDLQGQAFLHDYDWRKDTDFSVLELILTAPVVVASWISLQYYGSTVAPETFGAGNKLLHNVTGGIGVVEGNGGLLRAGLPWQSVHDGERLVHQPLRLSVLIEAPHEAISTILDRYPEVRALFDNRWLHLFALDDDGRMNWRYVGDGGWEHADNPPTNQRVASFE</sequence>
<organism>
    <name type="scientific">Rhodopseudomonas palustris (strain ATCC BAA-98 / CGA009)</name>
    <dbReference type="NCBI Taxonomy" id="258594"/>
    <lineage>
        <taxon>Bacteria</taxon>
        <taxon>Pseudomonadati</taxon>
        <taxon>Pseudomonadota</taxon>
        <taxon>Alphaproteobacteria</taxon>
        <taxon>Hyphomicrobiales</taxon>
        <taxon>Nitrobacteraceae</taxon>
        <taxon>Rhodopseudomonas</taxon>
    </lineage>
</organism>
<dbReference type="EMBL" id="BX572602">
    <property type="protein sequence ID" value="CAE28437.1"/>
    <property type="molecule type" value="Genomic_DNA"/>
</dbReference>
<dbReference type="RefSeq" id="WP_011158544.1">
    <property type="nucleotide sequence ID" value="NZ_CP116810.1"/>
</dbReference>
<dbReference type="SMR" id="Q6N5H8"/>
<dbReference type="STRING" id="258594.RPA2996"/>
<dbReference type="GeneID" id="66894081"/>
<dbReference type="eggNOG" id="COG3002">
    <property type="taxonomic scope" value="Bacteria"/>
</dbReference>
<dbReference type="HOGENOM" id="CLU_009885_1_0_5"/>
<dbReference type="PhylomeDB" id="Q6N5H8"/>
<dbReference type="GO" id="GO:0005886">
    <property type="term" value="C:plasma membrane"/>
    <property type="evidence" value="ECO:0007669"/>
    <property type="project" value="UniProtKB-SubCell"/>
</dbReference>
<dbReference type="GO" id="GO:0008270">
    <property type="term" value="F:zinc ion binding"/>
    <property type="evidence" value="ECO:0007669"/>
    <property type="project" value="UniProtKB-UniRule"/>
</dbReference>
<dbReference type="HAMAP" id="MF_01871">
    <property type="entry name" value="DabA"/>
    <property type="match status" value="1"/>
</dbReference>
<dbReference type="InterPro" id="IPR018752">
    <property type="entry name" value="DabA"/>
</dbReference>
<dbReference type="PANTHER" id="PTHR38344:SF1">
    <property type="entry name" value="INORGANIC CARBON TRANSPORTER SUBUNIT DABA-RELATED"/>
    <property type="match status" value="1"/>
</dbReference>
<dbReference type="PANTHER" id="PTHR38344">
    <property type="entry name" value="UPF0753 PROTEIN AQ_863"/>
    <property type="match status" value="1"/>
</dbReference>
<dbReference type="Pfam" id="PF10070">
    <property type="entry name" value="DabA"/>
    <property type="match status" value="1"/>
</dbReference>
<protein>
    <recommendedName>
        <fullName evidence="1">Probable inorganic carbon transporter subunit DabA</fullName>
    </recommendedName>
</protein>